<comment type="function">
    <text evidence="1">Catalyzes the GTP-dependent successive addition of two or more gamma-linked L-glutamates to the L-lactyl phosphodiester of 7,8-didemethyl-8-hydroxy-5-deazariboflavin (F420-0) to form coenzyme F420-0-glutamyl-glutamate (F420-2) or polyglutamated F420 derivatives.</text>
</comment>
<comment type="catalytic activity">
    <reaction evidence="1">
        <text>oxidized coenzyme F420-0 + GTP + L-glutamate = oxidized coenzyme F420-1 + GDP + phosphate + H(+)</text>
        <dbReference type="Rhea" id="RHEA:30555"/>
        <dbReference type="ChEBI" id="CHEBI:15378"/>
        <dbReference type="ChEBI" id="CHEBI:29985"/>
        <dbReference type="ChEBI" id="CHEBI:37565"/>
        <dbReference type="ChEBI" id="CHEBI:43474"/>
        <dbReference type="ChEBI" id="CHEBI:58189"/>
        <dbReference type="ChEBI" id="CHEBI:59907"/>
        <dbReference type="ChEBI" id="CHEBI:59920"/>
        <dbReference type="EC" id="6.3.2.31"/>
    </reaction>
</comment>
<comment type="catalytic activity">
    <reaction evidence="1">
        <text>oxidized coenzyme F420-1 + GTP + L-glutamate = oxidized coenzyme F420-2 + GDP + phosphate + H(+)</text>
        <dbReference type="Rhea" id="RHEA:30523"/>
        <dbReference type="ChEBI" id="CHEBI:15378"/>
        <dbReference type="ChEBI" id="CHEBI:29985"/>
        <dbReference type="ChEBI" id="CHEBI:37565"/>
        <dbReference type="ChEBI" id="CHEBI:43474"/>
        <dbReference type="ChEBI" id="CHEBI:57922"/>
        <dbReference type="ChEBI" id="CHEBI:58189"/>
        <dbReference type="ChEBI" id="CHEBI:59920"/>
        <dbReference type="EC" id="6.3.2.34"/>
    </reaction>
</comment>
<comment type="cofactor">
    <cofactor evidence="1">
        <name>Mg(2+)</name>
        <dbReference type="ChEBI" id="CHEBI:18420"/>
    </cofactor>
    <cofactor evidence="1">
        <name>Mn(2+)</name>
        <dbReference type="ChEBI" id="CHEBI:29035"/>
    </cofactor>
    <text evidence="1">Binds 2 divalent metal cations per subunit. The ions could be magnesium and/or manganese.</text>
</comment>
<comment type="cofactor">
    <cofactor evidence="1">
        <name>K(+)</name>
        <dbReference type="ChEBI" id="CHEBI:29103"/>
    </cofactor>
    <text evidence="1">Monovalent cation. The ion could be potassium.</text>
</comment>
<comment type="pathway">
    <text evidence="1">Cofactor biosynthesis; coenzyme F420 biosynthesis.</text>
</comment>
<comment type="subunit">
    <text evidence="1">Homodimer.</text>
</comment>
<comment type="similarity">
    <text evidence="1">Belongs to the CofE family.</text>
</comment>
<proteinExistence type="inferred from homology"/>
<keyword id="KW-0342">GTP-binding</keyword>
<keyword id="KW-0436">Ligase</keyword>
<keyword id="KW-0460">Magnesium</keyword>
<keyword id="KW-0464">Manganese</keyword>
<keyword id="KW-0479">Metal-binding</keyword>
<keyword id="KW-0547">Nucleotide-binding</keyword>
<keyword id="KW-0630">Potassium</keyword>
<keyword id="KW-1185">Reference proteome</keyword>
<name>COFE_METKA</name>
<evidence type="ECO:0000255" key="1">
    <source>
        <dbReference type="HAMAP-Rule" id="MF_01258"/>
    </source>
</evidence>
<reference key="1">
    <citation type="journal article" date="2002" name="Proc. Natl. Acad. Sci. U.S.A.">
        <title>The complete genome of hyperthermophile Methanopyrus kandleri AV19 and monophyly of archaeal methanogens.</title>
        <authorList>
            <person name="Slesarev A.I."/>
            <person name="Mezhevaya K.V."/>
            <person name="Makarova K.S."/>
            <person name="Polushin N.N."/>
            <person name="Shcherbinina O.V."/>
            <person name="Shakhova V.V."/>
            <person name="Belova G.I."/>
            <person name="Aravind L."/>
            <person name="Natale D.A."/>
            <person name="Rogozin I.B."/>
            <person name="Tatusov R.L."/>
            <person name="Wolf Y.I."/>
            <person name="Stetter K.O."/>
            <person name="Malykh A.G."/>
            <person name="Koonin E.V."/>
            <person name="Kozyavkin S.A."/>
        </authorList>
    </citation>
    <scope>NUCLEOTIDE SEQUENCE [LARGE SCALE GENOMIC DNA]</scope>
    <source>
        <strain>AV19 / DSM 6324 / JCM 9639 / NBRC 100938</strain>
    </source>
</reference>
<accession>Q8TWR1</accession>
<sequence>MGGLPTLRIEPVPLERKVRPGDDLAELIAESAELEEGDVLAIAHTVVSKAEGALISLDEIEPSPFAKTLAERTGKDPRVVEVILREAESIVRVGPDFIITEVRGGMVCANAGVDESNAPPGYVIVLPEDPDRSARELRRRLRELVGVDVGVIITDTQGRPFREGVVGVAIGASGVPVLADRRGDRDLYGRELKITIVALGDLLASAAELVMGQADEGTPAVIFRGLKPELERFEGPRKARAIIRSPSRDIFR</sequence>
<protein>
    <recommendedName>
        <fullName evidence="1">Coenzyme F420:L-glutamate ligase</fullName>
        <ecNumber evidence="1">6.3.2.31</ecNumber>
        <ecNumber evidence="1">6.3.2.34</ecNumber>
    </recommendedName>
    <alternativeName>
        <fullName evidence="1">Coenzyme F420-0:L-glutamate ligase</fullName>
    </alternativeName>
    <alternativeName>
        <fullName evidence="1">Coenzyme F420-1:gamma-L-glutamate ligase</fullName>
    </alternativeName>
</protein>
<gene>
    <name evidence="1" type="primary">cofE</name>
    <name type="ordered locus">MK0971</name>
</gene>
<feature type="chain" id="PRO_0000145790" description="Coenzyme F420:L-glutamate ligase">
    <location>
        <begin position="1"/>
        <end position="252"/>
    </location>
</feature>
<feature type="binding site" evidence="1">
    <location>
        <begin position="12"/>
        <end position="15"/>
    </location>
    <ligand>
        <name>GTP</name>
        <dbReference type="ChEBI" id="CHEBI:37565"/>
    </ligand>
</feature>
<feature type="binding site" evidence="1">
    <location>
        <begin position="44"/>
        <end position="45"/>
    </location>
    <ligand>
        <name>GTP</name>
        <dbReference type="ChEBI" id="CHEBI:37565"/>
    </ligand>
</feature>
<feature type="binding site" evidence="1">
    <location>
        <position position="49"/>
    </location>
    <ligand>
        <name>GTP</name>
        <dbReference type="ChEBI" id="CHEBI:37565"/>
    </ligand>
</feature>
<feature type="binding site" evidence="1">
    <location>
        <position position="114"/>
    </location>
    <ligand>
        <name>a divalent metal cation</name>
        <dbReference type="ChEBI" id="CHEBI:60240"/>
        <label>1</label>
    </ligand>
</feature>
<feature type="binding site" evidence="1">
    <location>
        <position position="117"/>
    </location>
    <ligand>
        <name>GTP</name>
        <dbReference type="ChEBI" id="CHEBI:37565"/>
    </ligand>
</feature>
<feature type="binding site" evidence="1">
    <location>
        <position position="155"/>
    </location>
    <ligand>
        <name>a divalent metal cation</name>
        <dbReference type="ChEBI" id="CHEBI:60240"/>
        <label>1</label>
    </ligand>
</feature>
<feature type="binding site" evidence="1">
    <location>
        <position position="156"/>
    </location>
    <ligand>
        <name>a divalent metal cation</name>
        <dbReference type="ChEBI" id="CHEBI:60240"/>
        <label>2</label>
    </ligand>
</feature>
<feature type="binding site" evidence="1">
    <location>
        <begin position="211"/>
        <end position="218"/>
    </location>
    <ligand>
        <name>GTP</name>
        <dbReference type="ChEBI" id="CHEBI:37565"/>
    </ligand>
</feature>
<feature type="binding site" evidence="1">
    <location>
        <position position="213"/>
    </location>
    <ligand>
        <name>a divalent metal cation</name>
        <dbReference type="ChEBI" id="CHEBI:60240"/>
        <label>2</label>
    </ligand>
</feature>
<dbReference type="EC" id="6.3.2.31" evidence="1"/>
<dbReference type="EC" id="6.3.2.34" evidence="1"/>
<dbReference type="EMBL" id="AE009439">
    <property type="protein sequence ID" value="AAM02184.1"/>
    <property type="molecule type" value="Genomic_DNA"/>
</dbReference>
<dbReference type="RefSeq" id="WP_011019339.1">
    <property type="nucleotide sequence ID" value="NC_003551.1"/>
</dbReference>
<dbReference type="SMR" id="Q8TWR1"/>
<dbReference type="FunCoup" id="Q8TWR1">
    <property type="interactions" value="84"/>
</dbReference>
<dbReference type="STRING" id="190192.MK0971"/>
<dbReference type="PaxDb" id="190192-MK0971"/>
<dbReference type="EnsemblBacteria" id="AAM02184">
    <property type="protein sequence ID" value="AAM02184"/>
    <property type="gene ID" value="MK0971"/>
</dbReference>
<dbReference type="GeneID" id="1477072"/>
<dbReference type="KEGG" id="mka:MK0971"/>
<dbReference type="PATRIC" id="fig|190192.8.peg.1016"/>
<dbReference type="HOGENOM" id="CLU_051152_1_1_2"/>
<dbReference type="InParanoid" id="Q8TWR1"/>
<dbReference type="OrthoDB" id="11383at2157"/>
<dbReference type="UniPathway" id="UPA00071"/>
<dbReference type="Proteomes" id="UP000001826">
    <property type="component" value="Chromosome"/>
</dbReference>
<dbReference type="GO" id="GO:0052618">
    <property type="term" value="F:coenzyme F420-0:L-glutamate ligase activity"/>
    <property type="evidence" value="ECO:0007669"/>
    <property type="project" value="UniProtKB-UniRule"/>
</dbReference>
<dbReference type="GO" id="GO:0052619">
    <property type="term" value="F:coenzyme F420-1:gamma-L-glutamate ligase activity"/>
    <property type="evidence" value="ECO:0007669"/>
    <property type="project" value="UniProtKB-UniRule"/>
</dbReference>
<dbReference type="GO" id="GO:0005525">
    <property type="term" value="F:GTP binding"/>
    <property type="evidence" value="ECO:0007669"/>
    <property type="project" value="UniProtKB-KW"/>
</dbReference>
<dbReference type="GO" id="GO:0046872">
    <property type="term" value="F:metal ion binding"/>
    <property type="evidence" value="ECO:0007669"/>
    <property type="project" value="UniProtKB-KW"/>
</dbReference>
<dbReference type="GO" id="GO:0052645">
    <property type="term" value="P:F420-0 metabolic process"/>
    <property type="evidence" value="ECO:0007669"/>
    <property type="project" value="UniProtKB-UniRule"/>
</dbReference>
<dbReference type="Gene3D" id="3.30.1330.100">
    <property type="entry name" value="CofE-like"/>
    <property type="match status" value="1"/>
</dbReference>
<dbReference type="Gene3D" id="3.90.1660.10">
    <property type="entry name" value="CofE-like domain"/>
    <property type="match status" value="1"/>
</dbReference>
<dbReference type="HAMAP" id="MF_01258">
    <property type="entry name" value="F420_ligase_CofE"/>
    <property type="match status" value="1"/>
</dbReference>
<dbReference type="InterPro" id="IPR008225">
    <property type="entry name" value="F420-0_g-glutamyl_ligase"/>
</dbReference>
<dbReference type="InterPro" id="IPR002847">
    <property type="entry name" value="F420-0_gamma-glut_ligase-dom"/>
</dbReference>
<dbReference type="InterPro" id="IPR023659">
    <property type="entry name" value="F420_ligase_CofE_arc"/>
</dbReference>
<dbReference type="NCBIfam" id="TIGR01916">
    <property type="entry name" value="F420_cofE"/>
    <property type="match status" value="1"/>
</dbReference>
<dbReference type="NCBIfam" id="NF009809">
    <property type="entry name" value="PRK13293.1"/>
    <property type="match status" value="1"/>
</dbReference>
<dbReference type="PANTHER" id="PTHR47917">
    <property type="match status" value="1"/>
</dbReference>
<dbReference type="PANTHER" id="PTHR47917:SF1">
    <property type="entry name" value="COENZYME F420:L-GLUTAMATE LIGASE"/>
    <property type="match status" value="1"/>
</dbReference>
<dbReference type="Pfam" id="PF01996">
    <property type="entry name" value="F420_ligase"/>
    <property type="match status" value="1"/>
</dbReference>
<dbReference type="SUPFAM" id="SSF144010">
    <property type="entry name" value="CofE-like"/>
    <property type="match status" value="1"/>
</dbReference>
<organism>
    <name type="scientific">Methanopyrus kandleri (strain AV19 / DSM 6324 / JCM 9639 / NBRC 100938)</name>
    <dbReference type="NCBI Taxonomy" id="190192"/>
    <lineage>
        <taxon>Archaea</taxon>
        <taxon>Methanobacteriati</taxon>
        <taxon>Methanobacteriota</taxon>
        <taxon>Methanomada group</taxon>
        <taxon>Methanopyri</taxon>
        <taxon>Methanopyrales</taxon>
        <taxon>Methanopyraceae</taxon>
        <taxon>Methanopyrus</taxon>
    </lineage>
</organism>